<reference key="1">
    <citation type="journal article" date="1999" name="Trends Plant Sci.">
        <title>A guide to the Lhc genes and their relatives in Arabidopsis.</title>
        <authorList>
            <person name="Jansson S."/>
        </authorList>
    </citation>
    <scope>NUCLEOTIDE SEQUENCE [MRNA] (ISOFORM 1)</scope>
    <scope>GENE FAMILY</scope>
    <scope>NOMENCLATURE</scope>
</reference>
<reference key="2">
    <citation type="journal article" date="2000" name="DNA Res.">
        <title>Structural analysis of Arabidopsis thaliana chromosome 3. I. Sequence features of the regions of 4,504,864 bp covered by sixty P1 and TAC clones.</title>
        <authorList>
            <person name="Sato S."/>
            <person name="Nakamura Y."/>
            <person name="Kaneko T."/>
            <person name="Katoh T."/>
            <person name="Asamizu E."/>
            <person name="Tabata S."/>
        </authorList>
    </citation>
    <scope>NUCLEOTIDE SEQUENCE [LARGE SCALE GENOMIC DNA]</scope>
    <source>
        <strain>cv. Columbia</strain>
    </source>
</reference>
<reference key="3">
    <citation type="journal article" date="2017" name="Plant J.">
        <title>Araport11: a complete reannotation of the Arabidopsis thaliana reference genome.</title>
        <authorList>
            <person name="Cheng C.Y."/>
            <person name="Krishnakumar V."/>
            <person name="Chan A.P."/>
            <person name="Thibaud-Nissen F."/>
            <person name="Schobel S."/>
            <person name="Town C.D."/>
        </authorList>
    </citation>
    <scope>GENOME REANNOTATION</scope>
    <source>
        <strain>cv. Columbia</strain>
    </source>
</reference>
<reference key="4">
    <citation type="journal article" date="2003" name="Science">
        <title>Empirical analysis of transcriptional activity in the Arabidopsis genome.</title>
        <authorList>
            <person name="Yamada K."/>
            <person name="Lim J."/>
            <person name="Dale J.M."/>
            <person name="Chen H."/>
            <person name="Shinn P."/>
            <person name="Palm C.J."/>
            <person name="Southwick A.M."/>
            <person name="Wu H.C."/>
            <person name="Kim C.J."/>
            <person name="Nguyen M."/>
            <person name="Pham P.K."/>
            <person name="Cheuk R.F."/>
            <person name="Karlin-Newmann G."/>
            <person name="Liu S.X."/>
            <person name="Lam B."/>
            <person name="Sakano H."/>
            <person name="Wu T."/>
            <person name="Yu G."/>
            <person name="Miranda M."/>
            <person name="Quach H.L."/>
            <person name="Tripp M."/>
            <person name="Chang C.H."/>
            <person name="Lee J.M."/>
            <person name="Toriumi M.J."/>
            <person name="Chan M.M."/>
            <person name="Tang C.C."/>
            <person name="Onodera C.S."/>
            <person name="Deng J.M."/>
            <person name="Akiyama K."/>
            <person name="Ansari Y."/>
            <person name="Arakawa T."/>
            <person name="Banh J."/>
            <person name="Banno F."/>
            <person name="Bowser L."/>
            <person name="Brooks S.Y."/>
            <person name="Carninci P."/>
            <person name="Chao Q."/>
            <person name="Choy N."/>
            <person name="Enju A."/>
            <person name="Goldsmith A.D."/>
            <person name="Gurjal M."/>
            <person name="Hansen N.F."/>
            <person name="Hayashizaki Y."/>
            <person name="Johnson-Hopson C."/>
            <person name="Hsuan V.W."/>
            <person name="Iida K."/>
            <person name="Karnes M."/>
            <person name="Khan S."/>
            <person name="Koesema E."/>
            <person name="Ishida J."/>
            <person name="Jiang P.X."/>
            <person name="Jones T."/>
            <person name="Kawai J."/>
            <person name="Kamiya A."/>
            <person name="Meyers C."/>
            <person name="Nakajima M."/>
            <person name="Narusaka M."/>
            <person name="Seki M."/>
            <person name="Sakurai T."/>
            <person name="Satou M."/>
            <person name="Tamse R."/>
            <person name="Vaysberg M."/>
            <person name="Wallender E.K."/>
            <person name="Wong C."/>
            <person name="Yamamura Y."/>
            <person name="Yuan S."/>
            <person name="Shinozaki K."/>
            <person name="Davis R.W."/>
            <person name="Theologis A."/>
            <person name="Ecker J.R."/>
        </authorList>
    </citation>
    <scope>NUCLEOTIDE SEQUENCE [LARGE SCALE MRNA] (ISOFORM 1)</scope>
    <source>
        <strain>cv. Columbia</strain>
    </source>
</reference>
<reference key="5">
    <citation type="journal article" date="2009" name="DNA Res.">
        <title>Analysis of multiple occurrences of alternative splicing events in Arabidopsis thaliana using novel sequenced full-length cDNAs.</title>
        <authorList>
            <person name="Iida K."/>
            <person name="Fukami-Kobayashi K."/>
            <person name="Toyoda A."/>
            <person name="Sakaki Y."/>
            <person name="Kobayashi M."/>
            <person name="Seki M."/>
            <person name="Shinozaki K."/>
        </authorList>
    </citation>
    <scope>NUCLEOTIDE SEQUENCE [LARGE SCALE MRNA] (ISOFORM 2)</scope>
    <source>
        <strain>cv. Columbia</strain>
        <tissue>Flower</tissue>
        <tissue>Silique</tissue>
    </source>
</reference>
<reference key="6">
    <citation type="journal article" date="2010" name="Proc. Natl. Acad. Sci. U.S.A.">
        <title>The PPH1 phosphatase is specifically involved in LHCII dephosphorylation and state transitions in Arabidopsis.</title>
        <authorList>
            <person name="Shapiguzov A."/>
            <person name="Ingelsson B."/>
            <person name="Samol I."/>
            <person name="Andres C."/>
            <person name="Kessler F."/>
            <person name="Rochaix J.D."/>
            <person name="Vener A.V."/>
            <person name="Goldschmidt-Clermont M."/>
        </authorList>
    </citation>
    <scope>DEPHOSPHORYLATION BY PPH1</scope>
</reference>
<reference key="7">
    <citation type="journal article" date="2012" name="BMC Plant Biol.">
        <title>Arabidopsis plants grown in the field and climate chambers significantly differ in leaf morphology and photosystem components.</title>
        <authorList>
            <person name="Mishra Y."/>
            <person name="Jaenkaenpaeae H.J."/>
            <person name="Kiss A.Z."/>
            <person name="Funk C."/>
            <person name="Schroeder W.P."/>
            <person name="Jansson S."/>
        </authorList>
    </citation>
    <scope>INDUCTION BY LOW LIGHT</scope>
    <source>
        <strain>cv. Columbia</strain>
    </source>
</reference>
<reference key="8">
    <citation type="journal article" date="2012" name="J. Biol. Chem.">
        <title>Redox-mediated mechanisms regulate DNA binding activity of the G-group of basic region leucine zipper (bZIP) transcription factors in Arabidopsis.</title>
        <authorList>
            <person name="Shaikhali J."/>
            <person name="Noren L."/>
            <person name="de Dios Barajas-Lopez J."/>
            <person name="Srivastava V."/>
            <person name="Koenig J."/>
            <person name="Sauer U.H."/>
            <person name="Wingsle G."/>
            <person name="Dietz K.J."/>
            <person name="Strand A."/>
        </authorList>
    </citation>
    <scope>INDUCTION BY BZIP68 AND GBF1</scope>
    <source>
        <strain>cv. Columbia</strain>
    </source>
</reference>
<reference key="9">
    <citation type="journal article" date="2013" name="J. Photochem. Photobiol. B">
        <title>Change in fast Chl a fluorescence transients, 2 dimensional protein profile and pigment protein interactions during state transitions in Arabidopsis thaliana.</title>
        <authorList>
            <person name="Nellaepalli S."/>
            <person name="Kodru S."/>
            <person name="Malavath T."/>
            <person name="Subramanyam R."/>
        </authorList>
    </citation>
    <scope>FUNCTION</scope>
    <scope>PHOSPHORYLATION</scope>
    <scope>SUBCELLULAR LOCATION</scope>
    <scope>SUBUNIT</scope>
</reference>
<reference key="10">
    <citation type="journal article" date="2013" name="J. Plant Physiol.">
        <title>AtFtsH heterocomplex-mediated degradation of apoproteins of the major light harvesting complex of photosystem II (LHCII) in response to stresses.</title>
        <authorList>
            <person name="Lucinski R."/>
            <person name="Jackowski G."/>
        </authorList>
    </citation>
    <scope>REPRESSION BY DESICCATION; COLD AND HIGH IRRADIANCE</scope>
    <source>
        <strain>cv. Columbia</strain>
    </source>
</reference>
<reference key="11">
    <citation type="journal article" date="2013" name="Plant J.">
        <title>Very rapid phosphorylation kinetics suggest a unique role for Lhcb2 during state transitions in Arabidopsis.</title>
        <authorList>
            <person name="Leoni C."/>
            <person name="Pietrzykowska M."/>
            <person name="Kiss A.Z."/>
            <person name="Suorsa M."/>
            <person name="Ceci L.R."/>
            <person name="Aro E.M."/>
            <person name="Jansson S."/>
        </authorList>
    </citation>
    <scope>FUNCTION</scope>
    <scope>PHOSPHORYLATION AT THR-41 BY STN7</scope>
    <scope>SUBUNIT</scope>
</reference>
<reference key="12">
    <citation type="journal article" date="2014" name="Plant Cell">
        <title>The light-harvesting chlorophyll a/b binding proteins Lhcb1 and Lhcb2 play complementary roles during state transitions in Arabidopsis.</title>
        <authorList>
            <person name="Pietrzykowska M."/>
            <person name="Suorsa M."/>
            <person name="Semchonok D.A."/>
            <person name="Tikkanen M."/>
            <person name="Boekema E.J."/>
            <person name="Aro E.-M."/>
            <person name="Jansson S."/>
        </authorList>
    </citation>
    <scope>FUNCTION</scope>
    <scope>DISRUPTION PHENOTYPE</scope>
    <scope>SUBUNIT</scope>
    <source>
        <strain>cv. Columbia</strain>
    </source>
</reference>
<reference key="13">
    <citation type="journal article" date="2015" name="Biochim. Biophys. Acta">
        <title>The specific localizations of phosphorylated Lhcb1 and Lhcb2 isoforms reveal the role of Lhcb2 in the formation of the PSI-LHCII supercomplex in Arabidopsis during state transitions.</title>
        <authorList>
            <person name="Crepin A."/>
            <person name="Caffarri S."/>
        </authorList>
    </citation>
    <scope>FUNCTION</scope>
    <scope>SUBUNIT</scope>
    <scope>PHOSPHORYLATION BY STN7</scope>
    <scope>DEPHOSPHORYLATION BY PPH1</scope>
    <source>
        <strain>cv. Columbia</strain>
    </source>
</reference>
<feature type="transit peptide" description="Chloroplast" evidence="2">
    <location>
        <begin position="1"/>
        <end position="38"/>
    </location>
</feature>
<feature type="chain" id="PRO_0000438439" description="Chlorophyll a-b binding protein 2.4, chloroplastic">
    <location>
        <begin position="39"/>
        <end position="266"/>
    </location>
</feature>
<feature type="transmembrane region" description="Helical" evidence="5">
    <location>
        <begin position="152"/>
        <end position="172"/>
    </location>
</feature>
<feature type="transmembrane region" description="Helical" evidence="5">
    <location>
        <begin position="220"/>
        <end position="240"/>
    </location>
</feature>
<feature type="binding site" description="axial binding residue" evidence="2">
    <location>
        <position position="58"/>
    </location>
    <ligand>
        <name>chlorophyll b</name>
        <dbReference type="ChEBI" id="CHEBI:61721"/>
        <label>1</label>
    </ligand>
    <ligandPart>
        <name>Mg</name>
        <dbReference type="ChEBI" id="CHEBI:25107"/>
    </ligandPart>
</feature>
<feature type="binding site" evidence="1">
    <location>
        <position position="80"/>
    </location>
    <ligand>
        <name>chlorophyll a</name>
        <dbReference type="ChEBI" id="CHEBI:58416"/>
        <label>1</label>
    </ligand>
</feature>
<feature type="binding site" evidence="1">
    <location>
        <position position="86"/>
    </location>
    <ligand>
        <name>chlorophyll a</name>
        <dbReference type="ChEBI" id="CHEBI:58416"/>
        <label>1</label>
    </ligand>
</feature>
<feature type="binding site" description="axial binding residue" evidence="2">
    <location>
        <position position="99"/>
    </location>
    <ligand>
        <name>chlorophyll a</name>
        <dbReference type="ChEBI" id="CHEBI:58416"/>
        <label>1</label>
    </ligand>
    <ligandPart>
        <name>Mg</name>
        <dbReference type="ChEBI" id="CHEBI:25107"/>
    </ligandPart>
</feature>
<feature type="binding site" description="axial binding residue" evidence="2">
    <location>
        <position position="102"/>
    </location>
    <ligand>
        <name>chlorophyll a</name>
        <dbReference type="ChEBI" id="CHEBI:58416"/>
        <label>2</label>
    </ligand>
    <ligandPart>
        <name>Mg</name>
        <dbReference type="ChEBI" id="CHEBI:25107"/>
    </ligandPart>
</feature>
<feature type="binding site" evidence="1">
    <location>
        <position position="104"/>
    </location>
    <ligand>
        <name>chlorophyll b</name>
        <dbReference type="ChEBI" id="CHEBI:61721"/>
        <label>2</label>
    </ligand>
</feature>
<feature type="binding site" evidence="1">
    <location>
        <position position="137"/>
    </location>
    <ligand>
        <name>chlorophyll a</name>
        <dbReference type="ChEBI" id="CHEBI:58416"/>
        <label>3</label>
    </ligand>
</feature>
<feature type="binding site" evidence="1">
    <location>
        <position position="147"/>
    </location>
    <ligand>
        <name>chlorophyll a</name>
        <dbReference type="ChEBI" id="CHEBI:58416"/>
        <label>3</label>
    </ligand>
</feature>
<feature type="binding site" description="axial binding residue" evidence="2">
    <location>
        <position position="153"/>
    </location>
    <ligand>
        <name>chlorophyll b</name>
        <dbReference type="ChEBI" id="CHEBI:61721"/>
        <label>2</label>
    </ligand>
    <ligandPart>
        <name>Mg</name>
        <dbReference type="ChEBI" id="CHEBI:25107"/>
    </ligandPart>
</feature>
<feature type="binding site" evidence="1">
    <location>
        <position position="157"/>
    </location>
    <ligand>
        <name>chlorophyll b</name>
        <dbReference type="ChEBI" id="CHEBI:61721"/>
        <label>3</label>
    </ligand>
</feature>
<feature type="binding site" evidence="1">
    <location>
        <position position="165"/>
    </location>
    <ligand>
        <name>chlorophyll b</name>
        <dbReference type="ChEBI" id="CHEBI:61721"/>
        <label>4</label>
    </ligand>
</feature>
<feature type="binding site" evidence="1">
    <location>
        <position position="165"/>
    </location>
    <ligand>
        <name>chlorophyll b</name>
        <dbReference type="ChEBI" id="CHEBI:61721"/>
        <label>5</label>
    </ligand>
</feature>
<feature type="binding site" description="axial binding residue" evidence="2">
    <location>
        <position position="173"/>
    </location>
    <ligand>
        <name>chlorophyll b</name>
        <dbReference type="ChEBI" id="CHEBI:61721"/>
        <label>3</label>
    </ligand>
    <ligandPart>
        <name>Mg</name>
        <dbReference type="ChEBI" id="CHEBI:25107"/>
    </ligandPart>
</feature>
<feature type="binding site" evidence="1">
    <location>
        <position position="176"/>
    </location>
    <ligand>
        <name>chlorophyll b</name>
        <dbReference type="ChEBI" id="CHEBI:61721"/>
        <label>4</label>
    </ligand>
</feature>
<feature type="binding site" evidence="1">
    <location>
        <position position="182"/>
    </location>
    <ligand>
        <name>chlorophyll b</name>
        <dbReference type="ChEBI" id="CHEBI:61721"/>
        <label>2</label>
    </ligand>
</feature>
<feature type="binding site" evidence="1">
    <location>
        <position position="213"/>
    </location>
    <ligand>
        <name>chlorophyll a</name>
        <dbReference type="ChEBI" id="CHEBI:58416"/>
        <label>5</label>
    </ligand>
</feature>
<feature type="binding site" description="axial binding residue" evidence="2">
    <location>
        <position position="214"/>
    </location>
    <ligand>
        <name>chlorophyll a</name>
        <dbReference type="ChEBI" id="CHEBI:58416"/>
        <label>3</label>
    </ligand>
    <ligandPart>
        <name>Mg</name>
        <dbReference type="ChEBI" id="CHEBI:25107"/>
    </ligandPart>
</feature>
<feature type="binding site" description="axial binding residue" evidence="2">
    <location>
        <position position="217"/>
    </location>
    <ligand>
        <name>chlorophyll a</name>
        <dbReference type="ChEBI" id="CHEBI:58416"/>
        <label>4</label>
    </ligand>
    <ligandPart>
        <name>Mg</name>
        <dbReference type="ChEBI" id="CHEBI:25107"/>
    </ligandPart>
</feature>
<feature type="binding site" evidence="1">
    <location>
        <position position="219"/>
    </location>
    <ligand>
        <name>chlorophyll a</name>
        <dbReference type="ChEBI" id="CHEBI:58416"/>
        <label>1</label>
    </ligand>
</feature>
<feature type="binding site" description="axial binding residue" evidence="2">
    <location>
        <position position="231"/>
    </location>
    <ligand>
        <name>chlorophyll a</name>
        <dbReference type="ChEBI" id="CHEBI:58416"/>
        <label>5</label>
    </ligand>
    <ligandPart>
        <name>Mg</name>
        <dbReference type="ChEBI" id="CHEBI:25107"/>
    </ligandPart>
</feature>
<feature type="binding site" description="axial binding residue" evidence="2">
    <location>
        <position position="246"/>
    </location>
    <ligand>
        <name>chlorophyll a</name>
        <dbReference type="ChEBI" id="CHEBI:58416"/>
        <label>6</label>
    </ligand>
    <ligandPart>
        <name>Mg</name>
        <dbReference type="ChEBI" id="CHEBI:25107"/>
    </ligandPart>
</feature>
<feature type="binding site" evidence="1">
    <location>
        <position position="255"/>
    </location>
    <ligand>
        <name>chlorophyll a</name>
        <dbReference type="ChEBI" id="CHEBI:58416"/>
        <label>6</label>
    </ligand>
</feature>
<feature type="binding site" evidence="1">
    <location>
        <position position="262"/>
    </location>
    <ligand>
        <name>chlorophyll b</name>
        <dbReference type="ChEBI" id="CHEBI:61721"/>
        <label>5</label>
    </ligand>
</feature>
<feature type="modified residue" description="Phosphothreonine; by STN7" evidence="10">
    <location>
        <position position="41"/>
    </location>
</feature>
<feature type="splice variant" id="VSP_058661" description="In isoform 2.">
    <location>
        <begin position="1"/>
        <end position="106"/>
    </location>
</feature>
<proteinExistence type="evidence at protein level"/>
<accession>Q9XF87</accession>
<accession>C0Z391</accession>
<name>CB24_ARATH</name>
<dbReference type="EMBL" id="AF134125">
    <property type="protein sequence ID" value="AAD28772.1"/>
    <property type="molecule type" value="mRNA"/>
</dbReference>
<dbReference type="EMBL" id="AB018114">
    <property type="protein sequence ID" value="BAB02693.1"/>
    <property type="molecule type" value="Genomic_DNA"/>
</dbReference>
<dbReference type="EMBL" id="CP002686">
    <property type="protein sequence ID" value="AEE77352.1"/>
    <property type="molecule type" value="Genomic_DNA"/>
</dbReference>
<dbReference type="EMBL" id="AF370557">
    <property type="protein sequence ID" value="AAK48984.1"/>
    <property type="molecule type" value="mRNA"/>
</dbReference>
<dbReference type="EMBL" id="BT006298">
    <property type="protein sequence ID" value="AAP13406.1"/>
    <property type="molecule type" value="mRNA"/>
</dbReference>
<dbReference type="EMBL" id="AK319055">
    <property type="protein sequence ID" value="BAH57170.1"/>
    <property type="molecule type" value="mRNA"/>
</dbReference>
<dbReference type="PIR" id="T52322">
    <property type="entry name" value="T52322"/>
</dbReference>
<dbReference type="RefSeq" id="NP_189406.1">
    <molecule id="Q9XF87-1"/>
    <property type="nucleotide sequence ID" value="NM_113685.4"/>
</dbReference>
<dbReference type="SMR" id="Q9XF87"/>
<dbReference type="FunCoup" id="Q9XF87">
    <property type="interactions" value="379"/>
</dbReference>
<dbReference type="STRING" id="3702.Q9XF87"/>
<dbReference type="iPTMnet" id="Q9XF87"/>
<dbReference type="PaxDb" id="3702-AT3G27690.1"/>
<dbReference type="ProteomicsDB" id="222788">
    <molecule id="Q9XF87-1"/>
</dbReference>
<dbReference type="EnsemblPlants" id="AT3G27690.1">
    <molecule id="Q9XF87-1"/>
    <property type="protein sequence ID" value="AT3G27690.1"/>
    <property type="gene ID" value="AT3G27690"/>
</dbReference>
<dbReference type="GeneID" id="822391"/>
<dbReference type="Gramene" id="AT3G27690.1">
    <molecule id="Q9XF87-1"/>
    <property type="protein sequence ID" value="AT3G27690.1"/>
    <property type="gene ID" value="AT3G27690"/>
</dbReference>
<dbReference type="KEGG" id="ath:AT3G27690"/>
<dbReference type="Araport" id="AT3G27690"/>
<dbReference type="TAIR" id="AT3G27690">
    <property type="gene designation" value="LHCB2.3"/>
</dbReference>
<dbReference type="eggNOG" id="ENOG502QPU1">
    <property type="taxonomic scope" value="Eukaryota"/>
</dbReference>
<dbReference type="HOGENOM" id="CLU_057943_2_0_1"/>
<dbReference type="InParanoid" id="Q9XF87"/>
<dbReference type="OrthoDB" id="423598at2759"/>
<dbReference type="PhylomeDB" id="Q9XF87"/>
<dbReference type="PRO" id="PR:Q9XF87"/>
<dbReference type="Proteomes" id="UP000006548">
    <property type="component" value="Chromosome 3"/>
</dbReference>
<dbReference type="ExpressionAtlas" id="Q9XF87">
    <property type="expression patterns" value="baseline and differential"/>
</dbReference>
<dbReference type="GO" id="GO:0009941">
    <property type="term" value="C:chloroplast envelope"/>
    <property type="evidence" value="ECO:0007005"/>
    <property type="project" value="TAIR"/>
</dbReference>
<dbReference type="GO" id="GO:0009535">
    <property type="term" value="C:chloroplast thylakoid membrane"/>
    <property type="evidence" value="ECO:0000314"/>
    <property type="project" value="UniProtKB"/>
</dbReference>
<dbReference type="GO" id="GO:0005829">
    <property type="term" value="C:cytosol"/>
    <property type="evidence" value="ECO:0007005"/>
    <property type="project" value="TAIR"/>
</dbReference>
<dbReference type="GO" id="GO:0009522">
    <property type="term" value="C:photosystem I"/>
    <property type="evidence" value="ECO:0000314"/>
    <property type="project" value="UniProtKB"/>
</dbReference>
<dbReference type="GO" id="GO:0009523">
    <property type="term" value="C:photosystem II"/>
    <property type="evidence" value="ECO:0000314"/>
    <property type="project" value="UniProtKB"/>
</dbReference>
<dbReference type="GO" id="GO:0009517">
    <property type="term" value="C:PSII associated light-harvesting complex II"/>
    <property type="evidence" value="ECO:0000314"/>
    <property type="project" value="UniProtKB"/>
</dbReference>
<dbReference type="GO" id="GO:0009579">
    <property type="term" value="C:thylakoid"/>
    <property type="evidence" value="ECO:0007005"/>
    <property type="project" value="TAIR"/>
</dbReference>
<dbReference type="GO" id="GO:0016168">
    <property type="term" value="F:chlorophyll binding"/>
    <property type="evidence" value="ECO:0007669"/>
    <property type="project" value="UniProtKB-KW"/>
</dbReference>
<dbReference type="GO" id="GO:0046872">
    <property type="term" value="F:metal ion binding"/>
    <property type="evidence" value="ECO:0007669"/>
    <property type="project" value="UniProtKB-KW"/>
</dbReference>
<dbReference type="GO" id="GO:0003729">
    <property type="term" value="F:mRNA binding"/>
    <property type="evidence" value="ECO:0000314"/>
    <property type="project" value="TAIR"/>
</dbReference>
<dbReference type="GO" id="GO:0071215">
    <property type="term" value="P:cellular response to abscisic acid stimulus"/>
    <property type="evidence" value="ECO:0000250"/>
    <property type="project" value="UniProtKB"/>
</dbReference>
<dbReference type="GO" id="GO:0042631">
    <property type="term" value="P:cellular response to water deprivation"/>
    <property type="evidence" value="ECO:0000250"/>
    <property type="project" value="UniProtKB"/>
</dbReference>
<dbReference type="GO" id="GO:0009768">
    <property type="term" value="P:photosynthesis, light harvesting in photosystem I"/>
    <property type="evidence" value="ECO:0000314"/>
    <property type="project" value="UniProtKB"/>
</dbReference>
<dbReference type="GO" id="GO:0009769">
    <property type="term" value="P:photosynthesis, light harvesting in photosystem II"/>
    <property type="evidence" value="ECO:0000314"/>
    <property type="project" value="UniProtKB"/>
</dbReference>
<dbReference type="GO" id="GO:1903428">
    <property type="term" value="P:positive regulation of reactive oxygen species biosynthetic process"/>
    <property type="evidence" value="ECO:0000250"/>
    <property type="project" value="UniProtKB"/>
</dbReference>
<dbReference type="GO" id="GO:0090333">
    <property type="term" value="P:regulation of stomatal closure"/>
    <property type="evidence" value="ECO:0000250"/>
    <property type="project" value="UniProtKB"/>
</dbReference>
<dbReference type="GO" id="GO:0009409">
    <property type="term" value="P:response to cold"/>
    <property type="evidence" value="ECO:0000270"/>
    <property type="project" value="UniProtKB"/>
</dbReference>
<dbReference type="GO" id="GO:0009269">
    <property type="term" value="P:response to desiccation"/>
    <property type="evidence" value="ECO:0000270"/>
    <property type="project" value="UniProtKB"/>
</dbReference>
<dbReference type="GO" id="GO:0010218">
    <property type="term" value="P:response to far red light"/>
    <property type="evidence" value="ECO:0000314"/>
    <property type="project" value="UniProtKB"/>
</dbReference>
<dbReference type="GO" id="GO:0009644">
    <property type="term" value="P:response to high light intensity"/>
    <property type="evidence" value="ECO:0000270"/>
    <property type="project" value="UniProtKB"/>
</dbReference>
<dbReference type="GO" id="GO:0009416">
    <property type="term" value="P:response to light stimulus"/>
    <property type="evidence" value="ECO:0000314"/>
    <property type="project" value="UniProtKB"/>
</dbReference>
<dbReference type="GO" id="GO:0009645">
    <property type="term" value="P:response to low light intensity stimulus"/>
    <property type="evidence" value="ECO:0000270"/>
    <property type="project" value="UniProtKB"/>
</dbReference>
<dbReference type="GO" id="GO:0010114">
    <property type="term" value="P:response to red light"/>
    <property type="evidence" value="ECO:0000314"/>
    <property type="project" value="UniProtKB"/>
</dbReference>
<dbReference type="FunFam" id="1.10.3460.10:FF:000001">
    <property type="entry name" value="Chlorophyll a-b binding protein, chloroplastic"/>
    <property type="match status" value="1"/>
</dbReference>
<dbReference type="Gene3D" id="1.10.3460.10">
    <property type="entry name" value="Chlorophyll a/b binding protein domain"/>
    <property type="match status" value="1"/>
</dbReference>
<dbReference type="InterPro" id="IPR001344">
    <property type="entry name" value="Chloro_AB-bd_pln"/>
</dbReference>
<dbReference type="InterPro" id="IPR022796">
    <property type="entry name" value="Chloroa_b-bind"/>
</dbReference>
<dbReference type="PANTHER" id="PTHR21649">
    <property type="entry name" value="CHLOROPHYLL A/B BINDING PROTEIN"/>
    <property type="match status" value="1"/>
</dbReference>
<dbReference type="Pfam" id="PF00504">
    <property type="entry name" value="Chloroa_b-bind"/>
    <property type="match status" value="1"/>
</dbReference>
<dbReference type="SUPFAM" id="SSF103511">
    <property type="entry name" value="Chlorophyll a-b binding protein"/>
    <property type="match status" value="1"/>
</dbReference>
<keyword id="KW-0025">Alternative splicing</keyword>
<keyword id="KW-0148">Chlorophyll</keyword>
<keyword id="KW-0150">Chloroplast</keyword>
<keyword id="KW-0157">Chromophore</keyword>
<keyword id="KW-0460">Magnesium</keyword>
<keyword id="KW-0472">Membrane</keyword>
<keyword id="KW-0479">Metal-binding</keyword>
<keyword id="KW-0597">Phosphoprotein</keyword>
<keyword id="KW-0602">Photosynthesis</keyword>
<keyword id="KW-0603">Photosystem I</keyword>
<keyword id="KW-0604">Photosystem II</keyword>
<keyword id="KW-0934">Plastid</keyword>
<keyword id="KW-1185">Reference proteome</keyword>
<keyword id="KW-0793">Thylakoid</keyword>
<keyword id="KW-0809">Transit peptide</keyword>
<keyword id="KW-0812">Transmembrane</keyword>
<keyword id="KW-1133">Transmembrane helix</keyword>
<comment type="function">
    <text evidence="3 4 10 11 12 13">The light-harvesting complex (LHC) functions as a light receptor, it captures and delivers excitation energy to photosystems with which it is closely associated (By similarity). Mediates rapid phosphorylation and migration of LHCII-PSII to photosystem I (PSI) after transition to state 2 (red) light conditions, thus leading to the formation of PSI-PSII-LHCII and PSI-LHCII supercomplex to balance the relative excitation of PSI and PSII (PubMed:23888908, PubMed:23995216, PubMed:25194026, PubMed:26392145). Involved in the production of reactive oxygen species (ROS) and stomatal closure upon abscisic acid (ABA) treatment. Required to prevent water loss (By similarity).</text>
</comment>
<comment type="cofactor">
    <text evidence="2">Binds at least 14 chlorophylls (8 Chl-a and 6 Chl-b) and carotenoids such as lutein and neoxanthin.</text>
</comment>
<comment type="subunit">
    <text evidence="2 10 11 12 13">The LHC complex consists of chlorophyll a-b binding proteins (By similarity). Component of LHCII trimers made of LHCB1, LHCB2 and LHCB3 subunits (PubMed:23888908, PubMed:23995216, PubMed:25194026). Associated with super- (PSI-LHCII and PSII-LHCII) and mega-complexes (PSI-PSII-LHCII) containing LHCII and both photosystem (PS)I and PSII, in state 2 (red) light conditions (PubMed:23888908, PubMed:23995216, PubMed:25194026, PubMed:26392145).</text>
</comment>
<comment type="subcellular location">
    <subcellularLocation>
        <location evidence="11">Plastid</location>
        <location evidence="11">Chloroplast thylakoid membrane</location>
        <topology evidence="5">Multi-pass membrane protein</topology>
    </subcellularLocation>
</comment>
<comment type="alternative products">
    <event type="alternative splicing"/>
    <isoform>
        <id>Q9XF87-1</id>
        <name>1</name>
        <sequence type="displayed"/>
    </isoform>
    <isoform>
        <id>Q9XF87-2</id>
        <name>2</name>
        <sequence type="described" ref="VSP_058661"/>
    </isoform>
</comment>
<comment type="induction">
    <text evidence="7 8 9">Accumulates at stronger levels in low light than in normal or high light; more expressed in growth chamber conditions than when grown in the field (PubMed:22236032). Repressed in leaves exposed to desiccation, cold and high irradiance via a metalloprotease-dependent proteolytic process (at protein level) (PubMed:23598180). Activated by BZIP68 and GBF1 but repressed by BZIP16 (PubMed:22718771).</text>
</comment>
<comment type="PTM">
    <text evidence="6 10 11 13">Photoregulated by reversible but rapid phosphorylation by STN7 of its threonine residues under state 2 (red) light conditions (PubMed:23888908, PubMed:23995216, PubMed:26392145). Dephosphorylated by PPH1 in state 1 (far red) light conditions (PubMed:20176943, PubMed:23888908, PubMed:23995216, PubMed:26392145). Phosphorylation triggers the formation of the PSI-LHCII supercomplex (PubMed:26392145).</text>
</comment>
<comment type="disruption phenotype">
    <text evidence="12">In plants silenced with microRNAs, functional LHCII thylakoid protein complexes where LHCB2 is replaced by LHCB1. However these LHCII complexes are impaired in light state transitions, leading to stunted growth in high light.</text>
</comment>
<comment type="similarity">
    <text evidence="15">Belongs to the light-harvesting chlorophyll a/b-binding (LHC) protein family.</text>
</comment>
<sequence length="266" mass="28803">MATSAIQHSSFAGQTTLKPSNDLLRKIGASNGGGRIIMRRTVKSTPQSIWYGPDRPKYLGPFSENTPSYLTGEYPGDYGWDTAGLSADPETFAKNRELEVIHSRWAMLGALGCTFPEILSKNGVKFGEAVWFKAGSQIFSEGGLDYLGNPNLIHAQSILAIWACQVVLMGFIEGYRIGGGPLGEGLDPLYPGGAFDPLNLAEDPEAFSELKVKELKNGRLAMFSMFGFFVQAIVTGKGPIENLFDHIADPVANNAWAYATNFVPGK</sequence>
<gene>
    <name evidence="14" type="primary">LHCB2.4</name>
    <name evidence="16" type="ordered locus">At3g27690</name>
    <name evidence="17" type="ORF">MGF10.9</name>
</gene>
<protein>
    <recommendedName>
        <fullName evidence="14">Chlorophyll a-b binding protein 2.4, chloroplastic</fullName>
    </recommendedName>
    <alternativeName>
        <fullName evidence="14">Photosystem II light harvesting complex gene 2.4</fullName>
    </alternativeName>
    <alternativeName>
        <fullName evidence="14">Protein LIGHT-HARVESTING CHLOROPHYLL B-BINDING 2.4</fullName>
    </alternativeName>
</protein>
<organism>
    <name type="scientific">Arabidopsis thaliana</name>
    <name type="common">Mouse-ear cress</name>
    <dbReference type="NCBI Taxonomy" id="3702"/>
    <lineage>
        <taxon>Eukaryota</taxon>
        <taxon>Viridiplantae</taxon>
        <taxon>Streptophyta</taxon>
        <taxon>Embryophyta</taxon>
        <taxon>Tracheophyta</taxon>
        <taxon>Spermatophyta</taxon>
        <taxon>Magnoliopsida</taxon>
        <taxon>eudicotyledons</taxon>
        <taxon>Gunneridae</taxon>
        <taxon>Pentapetalae</taxon>
        <taxon>rosids</taxon>
        <taxon>malvids</taxon>
        <taxon>Brassicales</taxon>
        <taxon>Brassicaceae</taxon>
        <taxon>Camelineae</taxon>
        <taxon>Arabidopsis</taxon>
    </lineage>
</organism>
<evidence type="ECO:0000250" key="1">
    <source>
        <dbReference type="UniProtKB" id="P07371"/>
    </source>
</evidence>
<evidence type="ECO:0000250" key="2">
    <source>
        <dbReference type="UniProtKB" id="P12333"/>
    </source>
</evidence>
<evidence type="ECO:0000250" key="3">
    <source>
        <dbReference type="UniProtKB" id="P27521"/>
    </source>
</evidence>
<evidence type="ECO:0000250" key="4">
    <source>
        <dbReference type="UniProtKB" id="Q9S7J7"/>
    </source>
</evidence>
<evidence type="ECO:0000255" key="5"/>
<evidence type="ECO:0000269" key="6">
    <source>
    </source>
</evidence>
<evidence type="ECO:0000269" key="7">
    <source>
    </source>
</evidence>
<evidence type="ECO:0000269" key="8">
    <source>
    </source>
</evidence>
<evidence type="ECO:0000269" key="9">
    <source>
    </source>
</evidence>
<evidence type="ECO:0000269" key="10">
    <source>
    </source>
</evidence>
<evidence type="ECO:0000269" key="11">
    <source>
    </source>
</evidence>
<evidence type="ECO:0000269" key="12">
    <source>
    </source>
</evidence>
<evidence type="ECO:0000269" key="13">
    <source>
    </source>
</evidence>
<evidence type="ECO:0000303" key="14">
    <source>
    </source>
</evidence>
<evidence type="ECO:0000305" key="15"/>
<evidence type="ECO:0000312" key="16">
    <source>
        <dbReference type="Araport" id="AT3G27690"/>
    </source>
</evidence>
<evidence type="ECO:0000312" key="17">
    <source>
        <dbReference type="EMBL" id="BAB02693.1"/>
    </source>
</evidence>